<name>RL18_COREF</name>
<proteinExistence type="inferred from homology"/>
<feature type="chain" id="PRO_0000131252" description="Large ribosomal subunit protein uL18">
    <location>
        <begin position="1"/>
        <end position="134"/>
    </location>
</feature>
<accession>Q8FS53</accession>
<comment type="function">
    <text evidence="1">This is one of the proteins that bind and probably mediate the attachment of the 5S RNA into the large ribosomal subunit, where it forms part of the central protuberance.</text>
</comment>
<comment type="subunit">
    <text evidence="1">Part of the 50S ribosomal subunit; part of the 5S rRNA/L5/L18/L25 subcomplex. Contacts the 5S and 23S rRNAs.</text>
</comment>
<comment type="similarity">
    <text evidence="1">Belongs to the universal ribosomal protein uL18 family.</text>
</comment>
<organism>
    <name type="scientific">Corynebacterium efficiens (strain DSM 44549 / YS-314 / AJ 12310 / JCM 11189 / NBRC 100395)</name>
    <dbReference type="NCBI Taxonomy" id="196164"/>
    <lineage>
        <taxon>Bacteria</taxon>
        <taxon>Bacillati</taxon>
        <taxon>Actinomycetota</taxon>
        <taxon>Actinomycetes</taxon>
        <taxon>Mycobacteriales</taxon>
        <taxon>Corynebacteriaceae</taxon>
        <taxon>Corynebacterium</taxon>
    </lineage>
</organism>
<gene>
    <name evidence="1" type="primary">rplR</name>
    <name type="ordered locus">CE0551</name>
</gene>
<keyword id="KW-1185">Reference proteome</keyword>
<keyword id="KW-0687">Ribonucleoprotein</keyword>
<keyword id="KW-0689">Ribosomal protein</keyword>
<keyword id="KW-0694">RNA-binding</keyword>
<keyword id="KW-0699">rRNA-binding</keyword>
<sequence length="134" mass="14770">MSNTENKQKRVSVGKDIATRRRVARARRHFRIRKTLRGTPEAPRLVVHRSSRHMHVQIIDDLAGHTLAAASSIEPEVRAVEGDKKAKGAKVGQLIAERAKAAGIEQVVFDRAGYKYHGRVAALADAAREGGLKF</sequence>
<reference key="1">
    <citation type="journal article" date="2003" name="Genome Res.">
        <title>Comparative complete genome sequence analysis of the amino acid replacements responsible for the thermostability of Corynebacterium efficiens.</title>
        <authorList>
            <person name="Nishio Y."/>
            <person name="Nakamura Y."/>
            <person name="Kawarabayasi Y."/>
            <person name="Usuda Y."/>
            <person name="Kimura E."/>
            <person name="Sugimoto S."/>
            <person name="Matsui K."/>
            <person name="Yamagishi A."/>
            <person name="Kikuchi H."/>
            <person name="Ikeo K."/>
            <person name="Gojobori T."/>
        </authorList>
    </citation>
    <scope>NUCLEOTIDE SEQUENCE [LARGE SCALE GENOMIC DNA]</scope>
    <source>
        <strain>DSM 44549 / YS-314 / AJ 12310 / JCM 11189 / NBRC 100395</strain>
    </source>
</reference>
<evidence type="ECO:0000255" key="1">
    <source>
        <dbReference type="HAMAP-Rule" id="MF_01337"/>
    </source>
</evidence>
<evidence type="ECO:0000305" key="2"/>
<protein>
    <recommendedName>
        <fullName evidence="1">Large ribosomal subunit protein uL18</fullName>
    </recommendedName>
    <alternativeName>
        <fullName evidence="2">50S ribosomal protein L18</fullName>
    </alternativeName>
</protein>
<dbReference type="EMBL" id="BA000035">
    <property type="protein sequence ID" value="BAC17361.1"/>
    <property type="molecule type" value="Genomic_DNA"/>
</dbReference>
<dbReference type="RefSeq" id="WP_011075039.1">
    <property type="nucleotide sequence ID" value="NZ_GG700687.1"/>
</dbReference>
<dbReference type="SMR" id="Q8FS53"/>
<dbReference type="STRING" id="196164.gene:10740953"/>
<dbReference type="KEGG" id="cef:CE0551"/>
<dbReference type="eggNOG" id="COG0256">
    <property type="taxonomic scope" value="Bacteria"/>
</dbReference>
<dbReference type="HOGENOM" id="CLU_098841_0_1_11"/>
<dbReference type="OrthoDB" id="9810939at2"/>
<dbReference type="Proteomes" id="UP000001409">
    <property type="component" value="Chromosome"/>
</dbReference>
<dbReference type="GO" id="GO:0022625">
    <property type="term" value="C:cytosolic large ribosomal subunit"/>
    <property type="evidence" value="ECO:0007669"/>
    <property type="project" value="TreeGrafter"/>
</dbReference>
<dbReference type="GO" id="GO:0008097">
    <property type="term" value="F:5S rRNA binding"/>
    <property type="evidence" value="ECO:0007669"/>
    <property type="project" value="TreeGrafter"/>
</dbReference>
<dbReference type="GO" id="GO:0003735">
    <property type="term" value="F:structural constituent of ribosome"/>
    <property type="evidence" value="ECO:0007669"/>
    <property type="project" value="InterPro"/>
</dbReference>
<dbReference type="GO" id="GO:0006412">
    <property type="term" value="P:translation"/>
    <property type="evidence" value="ECO:0007669"/>
    <property type="project" value="UniProtKB-UniRule"/>
</dbReference>
<dbReference type="CDD" id="cd00432">
    <property type="entry name" value="Ribosomal_L18_L5e"/>
    <property type="match status" value="1"/>
</dbReference>
<dbReference type="FunFam" id="3.30.420.100:FF:000001">
    <property type="entry name" value="50S ribosomal protein L18"/>
    <property type="match status" value="1"/>
</dbReference>
<dbReference type="Gene3D" id="3.30.420.100">
    <property type="match status" value="1"/>
</dbReference>
<dbReference type="HAMAP" id="MF_01337_B">
    <property type="entry name" value="Ribosomal_uL18_B"/>
    <property type="match status" value="1"/>
</dbReference>
<dbReference type="InterPro" id="IPR004389">
    <property type="entry name" value="Ribosomal_uL18_bac-type"/>
</dbReference>
<dbReference type="InterPro" id="IPR005484">
    <property type="entry name" value="Ribosomal_uL18_bac/euk"/>
</dbReference>
<dbReference type="NCBIfam" id="TIGR00060">
    <property type="entry name" value="L18_bact"/>
    <property type="match status" value="1"/>
</dbReference>
<dbReference type="PANTHER" id="PTHR12899">
    <property type="entry name" value="39S RIBOSOMAL PROTEIN L18, MITOCHONDRIAL"/>
    <property type="match status" value="1"/>
</dbReference>
<dbReference type="PANTHER" id="PTHR12899:SF3">
    <property type="entry name" value="LARGE RIBOSOMAL SUBUNIT PROTEIN UL18M"/>
    <property type="match status" value="1"/>
</dbReference>
<dbReference type="Pfam" id="PF00861">
    <property type="entry name" value="Ribosomal_L18p"/>
    <property type="match status" value="1"/>
</dbReference>
<dbReference type="SUPFAM" id="SSF53137">
    <property type="entry name" value="Translational machinery components"/>
    <property type="match status" value="1"/>
</dbReference>